<proteinExistence type="evidence at protein level"/>
<protein>
    <recommendedName>
        <fullName>Replication protein A 14 kDa subunit</fullName>
        <shortName>RP-A p14</shortName>
    </recommendedName>
    <alternativeName>
        <fullName>Replication factor A protein 3</fullName>
        <shortName>RF-A protein 3</shortName>
    </alternativeName>
</protein>
<organism>
    <name type="scientific">Mus musculus</name>
    <name type="common">Mouse</name>
    <dbReference type="NCBI Taxonomy" id="10090"/>
    <lineage>
        <taxon>Eukaryota</taxon>
        <taxon>Metazoa</taxon>
        <taxon>Chordata</taxon>
        <taxon>Craniata</taxon>
        <taxon>Vertebrata</taxon>
        <taxon>Euteleostomi</taxon>
        <taxon>Mammalia</taxon>
        <taxon>Eutheria</taxon>
        <taxon>Euarchontoglires</taxon>
        <taxon>Glires</taxon>
        <taxon>Rodentia</taxon>
        <taxon>Myomorpha</taxon>
        <taxon>Muroidea</taxon>
        <taxon>Muridae</taxon>
        <taxon>Murinae</taxon>
        <taxon>Mus</taxon>
        <taxon>Mus</taxon>
    </lineage>
</organism>
<dbReference type="EMBL" id="AK005285">
    <property type="protein sequence ID" value="BAB23932.1"/>
    <property type="molecule type" value="mRNA"/>
</dbReference>
<dbReference type="EMBL" id="AK009916">
    <property type="protein sequence ID" value="BAB26583.1"/>
    <property type="molecule type" value="mRNA"/>
</dbReference>
<dbReference type="EMBL" id="AK021228">
    <property type="protein sequence ID" value="BAB32338.1"/>
    <property type="molecule type" value="mRNA"/>
</dbReference>
<dbReference type="EMBL" id="BC028489">
    <property type="protein sequence ID" value="AAH28489.1"/>
    <property type="molecule type" value="mRNA"/>
</dbReference>
<dbReference type="CCDS" id="CCDS19909.1"/>
<dbReference type="RefSeq" id="NP_080908.1">
    <property type="nucleotide sequence ID" value="NM_026632.4"/>
</dbReference>
<dbReference type="EMDB" id="EMD-2789"/>
<dbReference type="SMR" id="Q9CQ71"/>
<dbReference type="BioGRID" id="212756">
    <property type="interactions" value="20"/>
</dbReference>
<dbReference type="CORUM" id="Q9CQ71"/>
<dbReference type="FunCoup" id="Q9CQ71">
    <property type="interactions" value="1310"/>
</dbReference>
<dbReference type="IntAct" id="Q9CQ71">
    <property type="interactions" value="5"/>
</dbReference>
<dbReference type="MINT" id="Q9CQ71"/>
<dbReference type="STRING" id="10090.ENSMUSP00000012627"/>
<dbReference type="GlyGen" id="Q9CQ71">
    <property type="glycosylation" value="1 site, 1 N-linked glycan (1 site)"/>
</dbReference>
<dbReference type="PhosphoSitePlus" id="Q9CQ71"/>
<dbReference type="SwissPalm" id="Q9CQ71"/>
<dbReference type="jPOST" id="Q9CQ71"/>
<dbReference type="PaxDb" id="10090-ENSMUSP00000012627"/>
<dbReference type="PeptideAtlas" id="Q9CQ71"/>
<dbReference type="ProteomicsDB" id="255241"/>
<dbReference type="Pumba" id="Q9CQ71"/>
<dbReference type="Antibodypedia" id="1308">
    <property type="antibodies" value="295 antibodies from 31 providers"/>
</dbReference>
<dbReference type="DNASU" id="68240"/>
<dbReference type="Ensembl" id="ENSMUST00000012627.5">
    <property type="protein sequence ID" value="ENSMUSP00000012627.5"/>
    <property type="gene ID" value="ENSMUSG00000012483.5"/>
</dbReference>
<dbReference type="GeneID" id="68240"/>
<dbReference type="KEGG" id="mmu:68240"/>
<dbReference type="UCSC" id="uc009axl.2">
    <property type="organism name" value="mouse"/>
</dbReference>
<dbReference type="AGR" id="MGI:1915490"/>
<dbReference type="CTD" id="6119"/>
<dbReference type="MGI" id="MGI:1915490">
    <property type="gene designation" value="Rpa3"/>
</dbReference>
<dbReference type="VEuPathDB" id="HostDB:ENSMUSG00000012483"/>
<dbReference type="eggNOG" id="ENOG502S203">
    <property type="taxonomic scope" value="Eukaryota"/>
</dbReference>
<dbReference type="GeneTree" id="ENSGT00390000008029"/>
<dbReference type="HOGENOM" id="CLU_141922_0_1_1"/>
<dbReference type="InParanoid" id="Q9CQ71"/>
<dbReference type="OMA" id="HEFPEYY"/>
<dbReference type="OrthoDB" id="188186at2759"/>
<dbReference type="PhylomeDB" id="Q9CQ71"/>
<dbReference type="TreeFam" id="TF105243"/>
<dbReference type="Reactome" id="R-MMU-110312">
    <property type="pathway name" value="Translesion synthesis by REV1"/>
</dbReference>
<dbReference type="Reactome" id="R-MMU-110314">
    <property type="pathway name" value="Recognition of DNA damage by PCNA-containing replication complex"/>
</dbReference>
<dbReference type="Reactome" id="R-MMU-110320">
    <property type="pathway name" value="Translesion Synthesis by POLH"/>
</dbReference>
<dbReference type="Reactome" id="R-MMU-174437">
    <property type="pathway name" value="Removal of the Flap Intermediate from the C-strand"/>
</dbReference>
<dbReference type="Reactome" id="R-MMU-176187">
    <property type="pathway name" value="Activation of ATR in response to replication stress"/>
</dbReference>
<dbReference type="Reactome" id="R-MMU-3371453">
    <property type="pathway name" value="Regulation of HSF1-mediated heat shock response"/>
</dbReference>
<dbReference type="Reactome" id="R-MMU-5358565">
    <property type="pathway name" value="Mismatch repair (MMR) directed by MSH2:MSH6 (MutSalpha)"/>
</dbReference>
<dbReference type="Reactome" id="R-MMU-5358606">
    <property type="pathway name" value="Mismatch repair (MMR) directed by MSH2:MSH3 (MutSbeta)"/>
</dbReference>
<dbReference type="Reactome" id="R-MMU-5651801">
    <property type="pathway name" value="PCNA-Dependent Long Patch Base Excision Repair"/>
</dbReference>
<dbReference type="Reactome" id="R-MMU-5655862">
    <property type="pathway name" value="Translesion synthesis by POLK"/>
</dbReference>
<dbReference type="Reactome" id="R-MMU-5656121">
    <property type="pathway name" value="Translesion synthesis by POLI"/>
</dbReference>
<dbReference type="Reactome" id="R-MMU-5656169">
    <property type="pathway name" value="Termination of translesion DNA synthesis"/>
</dbReference>
<dbReference type="Reactome" id="R-MMU-5685938">
    <property type="pathway name" value="HDR through Single Strand Annealing (SSA)"/>
</dbReference>
<dbReference type="Reactome" id="R-MMU-5685942">
    <property type="pathway name" value="HDR through Homologous Recombination (HRR)"/>
</dbReference>
<dbReference type="Reactome" id="R-MMU-5693607">
    <property type="pathway name" value="Processing of DNA double-strand break ends"/>
</dbReference>
<dbReference type="Reactome" id="R-MMU-5696395">
    <property type="pathway name" value="Formation of Incision Complex in GG-NER"/>
</dbReference>
<dbReference type="Reactome" id="R-MMU-5696397">
    <property type="pathway name" value="Gap-filling DNA repair synthesis and ligation in GG-NER"/>
</dbReference>
<dbReference type="Reactome" id="R-MMU-5696400">
    <property type="pathway name" value="Dual Incision in GG-NER"/>
</dbReference>
<dbReference type="Reactome" id="R-MMU-6782135">
    <property type="pathway name" value="Dual incision in TC-NER"/>
</dbReference>
<dbReference type="Reactome" id="R-MMU-6782210">
    <property type="pathway name" value="Gap-filling DNA repair synthesis and ligation in TC-NER"/>
</dbReference>
<dbReference type="Reactome" id="R-MMU-6783310">
    <property type="pathway name" value="Fanconi Anemia Pathway"/>
</dbReference>
<dbReference type="Reactome" id="R-MMU-6804756">
    <property type="pathway name" value="Regulation of TP53 Activity through Phosphorylation"/>
</dbReference>
<dbReference type="Reactome" id="R-MMU-68962">
    <property type="pathway name" value="Activation of the pre-replicative complex"/>
</dbReference>
<dbReference type="Reactome" id="R-MMU-69166">
    <property type="pathway name" value="Removal of the Flap Intermediate"/>
</dbReference>
<dbReference type="Reactome" id="R-MMU-69473">
    <property type="pathway name" value="G2/M DNA damage checkpoint"/>
</dbReference>
<dbReference type="BioGRID-ORCS" id="68240">
    <property type="hits" value="36 hits in 115 CRISPR screens"/>
</dbReference>
<dbReference type="ChiTaRS" id="Rpa3">
    <property type="organism name" value="mouse"/>
</dbReference>
<dbReference type="PRO" id="PR:Q9CQ71"/>
<dbReference type="Proteomes" id="UP000000589">
    <property type="component" value="Chromosome 6"/>
</dbReference>
<dbReference type="RNAct" id="Q9CQ71">
    <property type="molecule type" value="protein"/>
</dbReference>
<dbReference type="Bgee" id="ENSMUSG00000012483">
    <property type="expression patterns" value="Expressed in medial ganglionic eminence and 256 other cell types or tissues"/>
</dbReference>
<dbReference type="GO" id="GO:0005662">
    <property type="term" value="C:DNA replication factor A complex"/>
    <property type="evidence" value="ECO:0007669"/>
    <property type="project" value="Ensembl"/>
</dbReference>
<dbReference type="GO" id="GO:0005654">
    <property type="term" value="C:nucleoplasm"/>
    <property type="evidence" value="ECO:0000304"/>
    <property type="project" value="Reactome"/>
</dbReference>
<dbReference type="GO" id="GO:0003684">
    <property type="term" value="F:damaged DNA binding"/>
    <property type="evidence" value="ECO:0007669"/>
    <property type="project" value="Ensembl"/>
</dbReference>
<dbReference type="GO" id="GO:0003697">
    <property type="term" value="F:single-stranded DNA binding"/>
    <property type="evidence" value="ECO:0007669"/>
    <property type="project" value="Ensembl"/>
</dbReference>
<dbReference type="GO" id="GO:0006284">
    <property type="term" value="P:base-excision repair"/>
    <property type="evidence" value="ECO:0007669"/>
    <property type="project" value="Ensembl"/>
</dbReference>
<dbReference type="GO" id="GO:0006260">
    <property type="term" value="P:DNA replication"/>
    <property type="evidence" value="ECO:0007669"/>
    <property type="project" value="UniProtKB-KW"/>
</dbReference>
<dbReference type="GO" id="GO:0000724">
    <property type="term" value="P:double-strand break repair via homologous recombination"/>
    <property type="evidence" value="ECO:0007669"/>
    <property type="project" value="Ensembl"/>
</dbReference>
<dbReference type="GO" id="GO:0006298">
    <property type="term" value="P:mismatch repair"/>
    <property type="evidence" value="ECO:0007669"/>
    <property type="project" value="Ensembl"/>
</dbReference>
<dbReference type="GO" id="GO:0006289">
    <property type="term" value="P:nucleotide-excision repair"/>
    <property type="evidence" value="ECO:0007669"/>
    <property type="project" value="Ensembl"/>
</dbReference>
<dbReference type="GO" id="GO:0042127">
    <property type="term" value="P:regulation of cell population proliferation"/>
    <property type="evidence" value="ECO:0000315"/>
    <property type="project" value="MGI"/>
</dbReference>
<dbReference type="GO" id="GO:0007346">
    <property type="term" value="P:regulation of mitotic cell cycle"/>
    <property type="evidence" value="ECO:0000315"/>
    <property type="project" value="MGI"/>
</dbReference>
<dbReference type="CDD" id="cd04479">
    <property type="entry name" value="RPA3"/>
    <property type="match status" value="1"/>
</dbReference>
<dbReference type="FunFam" id="2.40.50.140:FF:000187">
    <property type="entry name" value="Replication protein A 14 kDa subunit"/>
    <property type="match status" value="1"/>
</dbReference>
<dbReference type="Gene3D" id="2.40.50.140">
    <property type="entry name" value="Nucleic acid-binding proteins"/>
    <property type="match status" value="1"/>
</dbReference>
<dbReference type="InterPro" id="IPR012340">
    <property type="entry name" value="NA-bd_OB-fold"/>
</dbReference>
<dbReference type="InterPro" id="IPR013970">
    <property type="entry name" value="Rfa2"/>
</dbReference>
<dbReference type="PANTHER" id="PTHR15114:SF1">
    <property type="entry name" value="REPLICATION PROTEIN A 14 KDA SUBUNIT"/>
    <property type="match status" value="1"/>
</dbReference>
<dbReference type="PANTHER" id="PTHR15114">
    <property type="entry name" value="REPLICATION PROTEIN A3"/>
    <property type="match status" value="1"/>
</dbReference>
<dbReference type="Pfam" id="PF08661">
    <property type="entry name" value="Rep_fac-A_3"/>
    <property type="match status" value="1"/>
</dbReference>
<dbReference type="SUPFAM" id="SSF50249">
    <property type="entry name" value="Nucleic acid-binding proteins"/>
    <property type="match status" value="1"/>
</dbReference>
<gene>
    <name type="primary">Rpa3</name>
</gene>
<keyword id="KW-0227">DNA damage</keyword>
<keyword id="KW-0233">DNA recombination</keyword>
<keyword id="KW-0234">DNA repair</keyword>
<keyword id="KW-0235">DNA replication</keyword>
<keyword id="KW-1017">Isopeptide bond</keyword>
<keyword id="KW-0539">Nucleus</keyword>
<keyword id="KW-1185">Reference proteome</keyword>
<keyword id="KW-0832">Ubl conjugation</keyword>
<evidence type="ECO:0000250" key="1"/>
<evidence type="ECO:0000250" key="2">
    <source>
        <dbReference type="UniProtKB" id="P35244"/>
    </source>
</evidence>
<evidence type="ECO:0000305" key="3"/>
<feature type="chain" id="PRO_0000097277" description="Replication protein A 14 kDa subunit">
    <location>
        <begin position="1"/>
        <end position="121"/>
    </location>
</feature>
<feature type="cross-link" description="Glycyl lysine isopeptide (Lys-Gly) (interchain with G-Cter in ubiquitin)" evidence="2">
    <location>
        <position position="39"/>
    </location>
</feature>
<feature type="cross-link" description="Glycyl lysine isopeptide (Lys-Gly) (interchain with G-Cter in ubiquitin)" evidence="2">
    <location>
        <position position="88"/>
    </location>
</feature>
<accession>Q9CQ71</accession>
<reference key="1">
    <citation type="journal article" date="2005" name="Science">
        <title>The transcriptional landscape of the mammalian genome.</title>
        <authorList>
            <person name="Carninci P."/>
            <person name="Kasukawa T."/>
            <person name="Katayama S."/>
            <person name="Gough J."/>
            <person name="Frith M.C."/>
            <person name="Maeda N."/>
            <person name="Oyama R."/>
            <person name="Ravasi T."/>
            <person name="Lenhard B."/>
            <person name="Wells C."/>
            <person name="Kodzius R."/>
            <person name="Shimokawa K."/>
            <person name="Bajic V.B."/>
            <person name="Brenner S.E."/>
            <person name="Batalov S."/>
            <person name="Forrest A.R."/>
            <person name="Zavolan M."/>
            <person name="Davis M.J."/>
            <person name="Wilming L.G."/>
            <person name="Aidinis V."/>
            <person name="Allen J.E."/>
            <person name="Ambesi-Impiombato A."/>
            <person name="Apweiler R."/>
            <person name="Aturaliya R.N."/>
            <person name="Bailey T.L."/>
            <person name="Bansal M."/>
            <person name="Baxter L."/>
            <person name="Beisel K.W."/>
            <person name="Bersano T."/>
            <person name="Bono H."/>
            <person name="Chalk A.M."/>
            <person name="Chiu K.P."/>
            <person name="Choudhary V."/>
            <person name="Christoffels A."/>
            <person name="Clutterbuck D.R."/>
            <person name="Crowe M.L."/>
            <person name="Dalla E."/>
            <person name="Dalrymple B.P."/>
            <person name="de Bono B."/>
            <person name="Della Gatta G."/>
            <person name="di Bernardo D."/>
            <person name="Down T."/>
            <person name="Engstrom P."/>
            <person name="Fagiolini M."/>
            <person name="Faulkner G."/>
            <person name="Fletcher C.F."/>
            <person name="Fukushima T."/>
            <person name="Furuno M."/>
            <person name="Futaki S."/>
            <person name="Gariboldi M."/>
            <person name="Georgii-Hemming P."/>
            <person name="Gingeras T.R."/>
            <person name="Gojobori T."/>
            <person name="Green R.E."/>
            <person name="Gustincich S."/>
            <person name="Harbers M."/>
            <person name="Hayashi Y."/>
            <person name="Hensch T.K."/>
            <person name="Hirokawa N."/>
            <person name="Hill D."/>
            <person name="Huminiecki L."/>
            <person name="Iacono M."/>
            <person name="Ikeo K."/>
            <person name="Iwama A."/>
            <person name="Ishikawa T."/>
            <person name="Jakt M."/>
            <person name="Kanapin A."/>
            <person name="Katoh M."/>
            <person name="Kawasawa Y."/>
            <person name="Kelso J."/>
            <person name="Kitamura H."/>
            <person name="Kitano H."/>
            <person name="Kollias G."/>
            <person name="Krishnan S.P."/>
            <person name="Kruger A."/>
            <person name="Kummerfeld S.K."/>
            <person name="Kurochkin I.V."/>
            <person name="Lareau L.F."/>
            <person name="Lazarevic D."/>
            <person name="Lipovich L."/>
            <person name="Liu J."/>
            <person name="Liuni S."/>
            <person name="McWilliam S."/>
            <person name="Madan Babu M."/>
            <person name="Madera M."/>
            <person name="Marchionni L."/>
            <person name="Matsuda H."/>
            <person name="Matsuzawa S."/>
            <person name="Miki H."/>
            <person name="Mignone F."/>
            <person name="Miyake S."/>
            <person name="Morris K."/>
            <person name="Mottagui-Tabar S."/>
            <person name="Mulder N."/>
            <person name="Nakano N."/>
            <person name="Nakauchi H."/>
            <person name="Ng P."/>
            <person name="Nilsson R."/>
            <person name="Nishiguchi S."/>
            <person name="Nishikawa S."/>
            <person name="Nori F."/>
            <person name="Ohara O."/>
            <person name="Okazaki Y."/>
            <person name="Orlando V."/>
            <person name="Pang K.C."/>
            <person name="Pavan W.J."/>
            <person name="Pavesi G."/>
            <person name="Pesole G."/>
            <person name="Petrovsky N."/>
            <person name="Piazza S."/>
            <person name="Reed J."/>
            <person name="Reid J.F."/>
            <person name="Ring B.Z."/>
            <person name="Ringwald M."/>
            <person name="Rost B."/>
            <person name="Ruan Y."/>
            <person name="Salzberg S.L."/>
            <person name="Sandelin A."/>
            <person name="Schneider C."/>
            <person name="Schoenbach C."/>
            <person name="Sekiguchi K."/>
            <person name="Semple C.A."/>
            <person name="Seno S."/>
            <person name="Sessa L."/>
            <person name="Sheng Y."/>
            <person name="Shibata Y."/>
            <person name="Shimada H."/>
            <person name="Shimada K."/>
            <person name="Silva D."/>
            <person name="Sinclair B."/>
            <person name="Sperling S."/>
            <person name="Stupka E."/>
            <person name="Sugiura K."/>
            <person name="Sultana R."/>
            <person name="Takenaka Y."/>
            <person name="Taki K."/>
            <person name="Tammoja K."/>
            <person name="Tan S.L."/>
            <person name="Tang S."/>
            <person name="Taylor M.S."/>
            <person name="Tegner J."/>
            <person name="Teichmann S.A."/>
            <person name="Ueda H.R."/>
            <person name="van Nimwegen E."/>
            <person name="Verardo R."/>
            <person name="Wei C.L."/>
            <person name="Yagi K."/>
            <person name="Yamanishi H."/>
            <person name="Zabarovsky E."/>
            <person name="Zhu S."/>
            <person name="Zimmer A."/>
            <person name="Hide W."/>
            <person name="Bult C."/>
            <person name="Grimmond S.M."/>
            <person name="Teasdale R.D."/>
            <person name="Liu E.T."/>
            <person name="Brusic V."/>
            <person name="Quackenbush J."/>
            <person name="Wahlestedt C."/>
            <person name="Mattick J.S."/>
            <person name="Hume D.A."/>
            <person name="Kai C."/>
            <person name="Sasaki D."/>
            <person name="Tomaru Y."/>
            <person name="Fukuda S."/>
            <person name="Kanamori-Katayama M."/>
            <person name="Suzuki M."/>
            <person name="Aoki J."/>
            <person name="Arakawa T."/>
            <person name="Iida J."/>
            <person name="Imamura K."/>
            <person name="Itoh M."/>
            <person name="Kato T."/>
            <person name="Kawaji H."/>
            <person name="Kawagashira N."/>
            <person name="Kawashima T."/>
            <person name="Kojima M."/>
            <person name="Kondo S."/>
            <person name="Konno H."/>
            <person name="Nakano K."/>
            <person name="Ninomiya N."/>
            <person name="Nishio T."/>
            <person name="Okada M."/>
            <person name="Plessy C."/>
            <person name="Shibata K."/>
            <person name="Shiraki T."/>
            <person name="Suzuki S."/>
            <person name="Tagami M."/>
            <person name="Waki K."/>
            <person name="Watahiki A."/>
            <person name="Okamura-Oho Y."/>
            <person name="Suzuki H."/>
            <person name="Kawai J."/>
            <person name="Hayashizaki Y."/>
        </authorList>
    </citation>
    <scope>NUCLEOTIDE SEQUENCE [LARGE SCALE MRNA]</scope>
    <source>
        <strain>C57BL/6J</strain>
        <tissue>Cerebellum</tissue>
        <tissue>Tongue</tissue>
    </source>
</reference>
<reference key="2">
    <citation type="journal article" date="2004" name="Genome Res.">
        <title>The status, quality, and expansion of the NIH full-length cDNA project: the Mammalian Gene Collection (MGC).</title>
        <authorList>
            <consortium name="The MGC Project Team"/>
        </authorList>
    </citation>
    <scope>NUCLEOTIDE SEQUENCE [LARGE SCALE MRNA]</scope>
    <source>
        <strain>C57BL/6J</strain>
        <tissue>Mammary gland</tissue>
    </source>
</reference>
<reference key="3">
    <citation type="journal article" date="2010" name="Cell">
        <title>A tissue-specific atlas of mouse protein phosphorylation and expression.</title>
        <authorList>
            <person name="Huttlin E.L."/>
            <person name="Jedrychowski M.P."/>
            <person name="Elias J.E."/>
            <person name="Goswami T."/>
            <person name="Rad R."/>
            <person name="Beausoleil S.A."/>
            <person name="Villen J."/>
            <person name="Haas W."/>
            <person name="Sowa M.E."/>
            <person name="Gygi S.P."/>
        </authorList>
    </citation>
    <scope>IDENTIFICATION BY MASS SPECTROMETRY [LARGE SCALE ANALYSIS]</scope>
    <source>
        <tissue>Brain</tissue>
        <tissue>Brown adipose tissue</tissue>
        <tissue>Heart</tissue>
        <tissue>Kidney</tissue>
        <tissue>Liver</tissue>
        <tissue>Lung</tissue>
        <tissue>Pancreas</tissue>
        <tissue>Spleen</tissue>
        <tissue>Testis</tissue>
    </source>
</reference>
<comment type="function">
    <text evidence="2">As part of the heterotrimeric replication protein A complex (RPA/RP-A), binds and stabilizes single-stranded DNA intermediates, that form during DNA replication or upon DNA stress. It prevents their reannealing and in parallel, recruits and activates different proteins and complexes involved in DNA metabolism. Thereby, it plays an essential role both in DNA replication and the cellular response to DNA damage. In the cellular response to DNA damage, the RPA complex controls DNA repair and DNA damage checkpoint activation. Through recruitment of ATRIP activates the ATR kinase a master regulator of the DNA damage response. It is required for the recruitment of the DNA double-strand break repair factors RAD51 and RAD52 to chromatin, in response to DNA damage. Also recruits to sites of DNA damage proteins like XPA and XPG that are involved in nucleotide excision repair and is required for this mechanism of DNA repair. Also plays a role in base excision repair (BER), probably through interaction with UNG. Also recruits SMARCAL1/HARP, which is involved in replication fork restart, to sites of DNA damage. May also play a role in telomere maintenance. RPA3 has its own single-stranded DNA-binding activity and may be responsible for polarity of the binding of the complex to DNA.</text>
</comment>
<comment type="subunit">
    <text evidence="1">Component of the canonical replication protein A complex (RPA), a heterotrimer composed of RPA1, RPA2 and RPA3. Also a component of the aRPA, the alternative replication protein A complex, a trimeric complex similar to the replication protein A complex/RPA but where RPA1 and RPA3 are associated with RPA4 instead of RPA2 (By similarity).</text>
</comment>
<comment type="subcellular location">
    <subcellularLocation>
        <location evidence="1">Nucleus</location>
    </subcellularLocation>
</comment>
<comment type="PTM">
    <text evidence="2">Ubiquitinated by RFWD3 at stalled replication forks in response to DNA damage: ubiquitination by RFWD3 does not lead to degradation by the proteasome and promotes removal of the RPA complex from stalled replication forks, promoting homologous recombination.</text>
</comment>
<comment type="similarity">
    <text evidence="3">Belongs to the replication factor A protein 3 family.</text>
</comment>
<sequence>MEDIMQLPKARVNASMLPQYIDRPVCFVGKLEKIHPTGKMFILSDGEGKNGTIELMEPLDEEISGIVEVVGKVTAKATVLCASYTLFKEDTNRFDLELYNEAVKIINELPQFFPVGLPQHE</sequence>
<name>RFA3_MOUSE</name>